<sequence length="555" mass="63662">MSSSDARSRIRDRGYSEVPRDTSCPDGTIRTFQSLHSSELAVSADPLPPPPLPLQPPFGPSFYSSDTEEPAVAPDLKPVRRFVPDSWKNFFRGKKKDPEWDNPVSDIRYISDGVECSPPASPARANHHPYKDPSRGSQGTFNSQHEADAMFAHDPYASLDRRTQTARTYSEKVEEYNLRYAYMKSWAGLLRILGVVELLLGAGVFACVTAYIHKDNEWYNLFGYTQPYGMGGLGSLGNTYGGYYYSGPKTPFVLVVAGLAWITTIIILVLGMSMYYRTILLDSNWWPLTEFGVNVALFILYMAAAIVYVNDTNRGGLCYYPLFNTPMNAMFCRVEGGQIAAMIFLFVTMIVYLVSALVCLKLWRHEAARRHREFLEQQEINDPSLSSKRKMCEAAISDRQRDQEVNVKDLRTTTKMTPELLSGHIPPGHIPKPIVMPDYVAKYPVIQTDDDRERYKAVFQDQFSEYKELSAEVQAILRKFDELDTVMSRLPHHSENRQEHERISRIHEEFRKKKNDPSFLEKKERCDYLKNKLSHIKQRIQEYDKVMNWDTQGYP</sequence>
<keyword id="KW-0965">Cell junction</keyword>
<keyword id="KW-1003">Cell membrane</keyword>
<keyword id="KW-0175">Coiled coil</keyword>
<keyword id="KW-1009">Hearing</keyword>
<keyword id="KW-1017">Isopeptide bond</keyword>
<keyword id="KW-0472">Membrane</keyword>
<keyword id="KW-0597">Phosphoprotein</keyword>
<keyword id="KW-1185">Reference proteome</keyword>
<keyword id="KW-0796">Tight junction</keyword>
<keyword id="KW-0812">Transmembrane</keyword>
<keyword id="KW-1133">Transmembrane helix</keyword>
<keyword id="KW-0832">Ubl conjugation</keyword>
<proteinExistence type="evidence at protein level"/>
<gene>
    <name evidence="17" type="primary">Marveld2</name>
    <name type="synonym">Mrvldc2</name>
    <name type="synonym">Tric</name>
</gene>
<feature type="chain" id="PRO_0000271527" description="MARVEL domain-containing protein 2">
    <location>
        <begin position="1"/>
        <end position="555"/>
    </location>
</feature>
<feature type="topological domain" description="Cytoplasmic" evidence="2">
    <location>
        <begin position="1"/>
        <end position="191"/>
    </location>
</feature>
<feature type="transmembrane region" description="Helical" evidence="2">
    <location>
        <begin position="192"/>
        <end position="212"/>
    </location>
</feature>
<feature type="topological domain" description="Extracellular" evidence="2">
    <location>
        <begin position="213"/>
        <end position="251"/>
    </location>
</feature>
<feature type="transmembrane region" description="Helical" evidence="2">
    <location>
        <begin position="252"/>
        <end position="272"/>
    </location>
</feature>
<feature type="topological domain" description="Cytoplasmic" evidence="2">
    <location>
        <begin position="273"/>
        <end position="288"/>
    </location>
</feature>
<feature type="transmembrane region" description="Helical" evidence="2">
    <location>
        <begin position="289"/>
        <end position="309"/>
    </location>
</feature>
<feature type="topological domain" description="Extracellular" evidence="2">
    <location>
        <begin position="310"/>
        <end position="338"/>
    </location>
</feature>
<feature type="transmembrane region" description="Helical" evidence="2">
    <location>
        <begin position="339"/>
        <end position="359"/>
    </location>
</feature>
<feature type="topological domain" description="Cytoplasmic" evidence="2">
    <location>
        <begin position="360"/>
        <end position="555"/>
    </location>
</feature>
<feature type="domain" description="MARVEL" evidence="3">
    <location>
        <begin position="185"/>
        <end position="364"/>
    </location>
</feature>
<feature type="domain" description="OCEL" evidence="4">
    <location>
        <begin position="437"/>
        <end position="548"/>
    </location>
</feature>
<feature type="region of interest" description="Disordered" evidence="5">
    <location>
        <begin position="1"/>
        <end position="71"/>
    </location>
</feature>
<feature type="region of interest" description="Disordered" evidence="5">
    <location>
        <begin position="118"/>
        <end position="142"/>
    </location>
</feature>
<feature type="coiled-coil region" evidence="2">
    <location>
        <begin position="521"/>
        <end position="545"/>
    </location>
</feature>
<feature type="compositionally biased region" description="Basic and acidic residues" evidence="5">
    <location>
        <begin position="1"/>
        <end position="20"/>
    </location>
</feature>
<feature type="compositionally biased region" description="Pro residues" evidence="5">
    <location>
        <begin position="46"/>
        <end position="59"/>
    </location>
</feature>
<feature type="modified residue" description="Phosphoserine" evidence="18">
    <location>
        <position position="117"/>
    </location>
</feature>
<feature type="modified residue" description="Phosphoserine" evidence="18">
    <location>
        <position position="121"/>
    </location>
</feature>
<feature type="modified residue" description="Phosphoserine" evidence="1">
    <location>
        <position position="158"/>
    </location>
</feature>
<feature type="modified residue" description="Phosphothreonine" evidence="1">
    <location>
        <position position="163"/>
    </location>
</feature>
<feature type="modified residue" description="Phosphoserine" evidence="1">
    <location>
        <position position="384"/>
    </location>
</feature>
<feature type="cross-link" description="Glycyl lysine isopeptide (Lys-Gly) (interchain with G-Cter in ubiquitin)" evidence="1">
    <location>
        <position position="408"/>
    </location>
</feature>
<feature type="sequence conflict" description="In Ref. 4; AAH03296." evidence="16" ref="4">
    <original>ASPARANHHPYK</original>
    <variation>TRPPTRPPTRP</variation>
    <location>
        <begin position="120"/>
        <end position="131"/>
    </location>
</feature>
<protein>
    <recommendedName>
        <fullName evidence="16">MARVEL domain-containing protein 2</fullName>
    </recommendedName>
    <alternativeName>
        <fullName evidence="13 14 15">Tricellulin</fullName>
    </alternativeName>
</protein>
<organism>
    <name type="scientific">Mus musculus</name>
    <name type="common">Mouse</name>
    <dbReference type="NCBI Taxonomy" id="10090"/>
    <lineage>
        <taxon>Eukaryota</taxon>
        <taxon>Metazoa</taxon>
        <taxon>Chordata</taxon>
        <taxon>Craniata</taxon>
        <taxon>Vertebrata</taxon>
        <taxon>Euteleostomi</taxon>
        <taxon>Mammalia</taxon>
        <taxon>Eutheria</taxon>
        <taxon>Euarchontoglires</taxon>
        <taxon>Glires</taxon>
        <taxon>Rodentia</taxon>
        <taxon>Myomorpha</taxon>
        <taxon>Muroidea</taxon>
        <taxon>Muridae</taxon>
        <taxon>Murinae</taxon>
        <taxon>Mus</taxon>
        <taxon>Mus</taxon>
    </lineage>
</organism>
<evidence type="ECO:0000250" key="1">
    <source>
        <dbReference type="UniProtKB" id="Q8N4S9"/>
    </source>
</evidence>
<evidence type="ECO:0000255" key="2"/>
<evidence type="ECO:0000255" key="3">
    <source>
        <dbReference type="PROSITE-ProRule" id="PRU00581"/>
    </source>
</evidence>
<evidence type="ECO:0000255" key="4">
    <source>
        <dbReference type="PROSITE-ProRule" id="PRU01324"/>
    </source>
</evidence>
<evidence type="ECO:0000256" key="5">
    <source>
        <dbReference type="SAM" id="MobiDB-lite"/>
    </source>
</evidence>
<evidence type="ECO:0000269" key="6">
    <source>
    </source>
</evidence>
<evidence type="ECO:0000269" key="7">
    <source>
    </source>
</evidence>
<evidence type="ECO:0000269" key="8">
    <source>
    </source>
</evidence>
<evidence type="ECO:0000269" key="9">
    <source>
    </source>
</evidence>
<evidence type="ECO:0000269" key="10">
    <source>
    </source>
</evidence>
<evidence type="ECO:0000269" key="11">
    <source>
    </source>
</evidence>
<evidence type="ECO:0000269" key="12">
    <source>
    </source>
</evidence>
<evidence type="ECO:0000303" key="13">
    <source>
    </source>
</evidence>
<evidence type="ECO:0000303" key="14">
    <source>
    </source>
</evidence>
<evidence type="ECO:0000303" key="15">
    <source>
    </source>
</evidence>
<evidence type="ECO:0000305" key="16"/>
<evidence type="ECO:0000312" key="17">
    <source>
        <dbReference type="MGI" id="MGI:2446166"/>
    </source>
</evidence>
<evidence type="ECO:0007744" key="18">
    <source>
    </source>
</evidence>
<name>MALD2_MOUSE</name>
<comment type="function">
    <text evidence="6 8 12">Plays a role in the formation of tricellular tight junctions and of epithelial barriers (PubMed:16365161, PubMed:21245199). Required for normal hearing via its role in the separation of the endolymphatic and perilymphatic spaces of the organ of Corti in the inner ear, and for normal survival of hair cells in the organ of Corti (PubMed:26677943).</text>
</comment>
<comment type="subunit">
    <text evidence="1 8 9">Interacts with TJP1. Interacts with the ubiquitin ligase ITCH. Interacts (via C-terminal cytoplasmic domain) with LSR (via the cytoplasmic domain), ILDR1 and ILDR2; the interaction is required to recruit MARVELD2 to tricellular contacts (PubMed:21245199, PubMed:23239027).</text>
</comment>
<comment type="subcellular location">
    <subcellularLocation>
        <location evidence="6 7 12">Cell membrane</location>
        <topology evidence="16">Multi-pass membrane protein</topology>
    </subcellularLocation>
    <subcellularLocation>
        <location evidence="6 7 8 9 10 11 12">Cell junction</location>
        <location evidence="6 7 8 9 10 11 12">Tight junction</location>
    </subcellularLocation>
    <text evidence="6 7 8 9 10 11 12">Found at tricellular contacts.</text>
</comment>
<comment type="tissue specificity">
    <text evidence="6 7 9 12">Detected in small intestine, stomach and kidney, in epithelial cells (PubMed:16365161). Detected in pancreas, retina and lung, and in stria vascularis, utricle and the organ of Conti in the inner ear (at protein level) (PubMed:17186462, PubMed:26677943). Predominantly detected in small intestine, lung and kidney, with lower levels in liver, testis and brain (PubMed:16365161). In colon, expressed in the entire crypts (PubMed:23239027).</text>
</comment>
<comment type="PTM">
    <text evidence="1">Ubiquitinated by ITCH; but this ubiquitination does not lead to proteasomal degradation (By similarity). Polyubiquitinated at Lys-408 via 'Lys-63'-linked ubiquitin chains; deubiquitinated by USP53 (By similarity).</text>
</comment>
<comment type="PTM">
    <text evidence="6">Phosphorylated.</text>
</comment>
<comment type="disruption phenotype">
    <text evidence="12">No visible phenotype at birth. Mutant mice have normal gait and equilibrium and are fertile. They display severe and rapidly progressing hearing loss already 14 days after birth, and completely lack response to a 90 dB sound 21 days after birth. Endocochlear potential and paracellular permeability in the stria vascularis are not affected. The arrangement of inner and outer hair cells in the organ of Corti appears normal at 12 days after birth, but outer hair cells and inner hair cells have disappeared by 21 days after birth. Hair cells survive on cochlear explants (in vitro), suggesting that hair cell degeneration is due to K(+) leakage from the endolymph to the perilymph.</text>
</comment>
<comment type="similarity">
    <text evidence="4">Belongs to the ELL/occludin family.</text>
</comment>
<comment type="sequence caution" evidence="16">
    <conflict type="erroneous initiation">
        <sequence resource="EMBL-CDS" id="AAH49919"/>
    </conflict>
    <text>Truncated N-terminus.</text>
</comment>
<dbReference type="EMBL" id="AB219935">
    <property type="protein sequence ID" value="BAE54512.1"/>
    <property type="molecule type" value="mRNA"/>
</dbReference>
<dbReference type="EMBL" id="DQ143929">
    <property type="protein sequence ID" value="ABA18656.1"/>
    <property type="molecule type" value="mRNA"/>
</dbReference>
<dbReference type="EMBL" id="AK133741">
    <property type="protein sequence ID" value="BAE21816.1"/>
    <property type="molecule type" value="mRNA"/>
</dbReference>
<dbReference type="EMBL" id="BC003296">
    <property type="protein sequence ID" value="AAH03296.1"/>
    <property type="molecule type" value="mRNA"/>
</dbReference>
<dbReference type="EMBL" id="BC049919">
    <property type="protein sequence ID" value="AAH49919.1"/>
    <property type="status" value="ALT_INIT"/>
    <property type="molecule type" value="mRNA"/>
</dbReference>
<dbReference type="CCDS" id="CCDS26732.1"/>
<dbReference type="RefSeq" id="NP_001033691.1">
    <property type="nucleotide sequence ID" value="NM_001038602.4"/>
</dbReference>
<dbReference type="RefSeq" id="XP_006517668.1">
    <property type="nucleotide sequence ID" value="XM_006517605.2"/>
</dbReference>
<dbReference type="SMR" id="Q3UZP0"/>
<dbReference type="BioGRID" id="230044">
    <property type="interactions" value="1"/>
</dbReference>
<dbReference type="FunCoup" id="Q3UZP0">
    <property type="interactions" value="158"/>
</dbReference>
<dbReference type="STRING" id="10090.ENSMUSP00000153294"/>
<dbReference type="iPTMnet" id="Q3UZP0"/>
<dbReference type="PhosphoSitePlus" id="Q3UZP0"/>
<dbReference type="PaxDb" id="10090-ENSMUSP00000022137"/>
<dbReference type="ProteomicsDB" id="287301"/>
<dbReference type="Antibodypedia" id="23961">
    <property type="antibodies" value="172 antibodies from 25 providers"/>
</dbReference>
<dbReference type="DNASU" id="218518"/>
<dbReference type="Ensembl" id="ENSMUST00000022137.14">
    <property type="protein sequence ID" value="ENSMUSP00000022137.8"/>
    <property type="gene ID" value="ENSMUSG00000021636.17"/>
</dbReference>
<dbReference type="Ensembl" id="ENSMUST00000225754.2">
    <property type="protein sequence ID" value="ENSMUSP00000153294.2"/>
    <property type="gene ID" value="ENSMUSG00000021636.17"/>
</dbReference>
<dbReference type="GeneID" id="218518"/>
<dbReference type="KEGG" id="mmu:218518"/>
<dbReference type="UCSC" id="uc007rra.2">
    <property type="organism name" value="mouse"/>
</dbReference>
<dbReference type="AGR" id="MGI:2446166"/>
<dbReference type="CTD" id="153562"/>
<dbReference type="MGI" id="MGI:2446166">
    <property type="gene designation" value="Marveld2"/>
</dbReference>
<dbReference type="VEuPathDB" id="HostDB:ENSMUSG00000021636"/>
<dbReference type="eggNOG" id="KOG4796">
    <property type="taxonomic scope" value="Eukaryota"/>
</dbReference>
<dbReference type="GeneTree" id="ENSGT00940000155771"/>
<dbReference type="HOGENOM" id="CLU_039176_1_0_1"/>
<dbReference type="InParanoid" id="Q3UZP0"/>
<dbReference type="OMA" id="LLDSTWW"/>
<dbReference type="OrthoDB" id="6284217at2759"/>
<dbReference type="PhylomeDB" id="Q3UZP0"/>
<dbReference type="TreeFam" id="TF326161"/>
<dbReference type="BioGRID-ORCS" id="218518">
    <property type="hits" value="4 hits in 75 CRISPR screens"/>
</dbReference>
<dbReference type="ChiTaRS" id="Marveld2">
    <property type="organism name" value="mouse"/>
</dbReference>
<dbReference type="PRO" id="PR:Q3UZP0"/>
<dbReference type="Proteomes" id="UP000000589">
    <property type="component" value="Chromosome 13"/>
</dbReference>
<dbReference type="RNAct" id="Q3UZP0">
    <property type="molecule type" value="protein"/>
</dbReference>
<dbReference type="Bgee" id="ENSMUSG00000021636">
    <property type="expression patterns" value="Expressed in ear vesicle and 158 other cell types or tissues"/>
</dbReference>
<dbReference type="ExpressionAtlas" id="Q3UZP0">
    <property type="expression patterns" value="baseline and differential"/>
</dbReference>
<dbReference type="GO" id="GO:0016324">
    <property type="term" value="C:apical plasma membrane"/>
    <property type="evidence" value="ECO:0007669"/>
    <property type="project" value="Ensembl"/>
</dbReference>
<dbReference type="GO" id="GO:0016323">
    <property type="term" value="C:basolateral plasma membrane"/>
    <property type="evidence" value="ECO:0007669"/>
    <property type="project" value="Ensembl"/>
</dbReference>
<dbReference type="GO" id="GO:0005923">
    <property type="term" value="C:bicellular tight junction"/>
    <property type="evidence" value="ECO:0000314"/>
    <property type="project" value="MGI"/>
</dbReference>
<dbReference type="GO" id="GO:0031410">
    <property type="term" value="C:cytoplasmic vesicle"/>
    <property type="evidence" value="ECO:0007669"/>
    <property type="project" value="Ensembl"/>
</dbReference>
<dbReference type="GO" id="GO:0033010">
    <property type="term" value="C:paranodal junction"/>
    <property type="evidence" value="ECO:0000314"/>
    <property type="project" value="MGI"/>
</dbReference>
<dbReference type="GO" id="GO:0043220">
    <property type="term" value="C:Schmidt-Lanterman incisure"/>
    <property type="evidence" value="ECO:0000314"/>
    <property type="project" value="MGI"/>
</dbReference>
<dbReference type="GO" id="GO:0070160">
    <property type="term" value="C:tight junction"/>
    <property type="evidence" value="ECO:0000314"/>
    <property type="project" value="UniProtKB"/>
</dbReference>
<dbReference type="GO" id="GO:0061689">
    <property type="term" value="C:tricellular tight junction"/>
    <property type="evidence" value="ECO:0000314"/>
    <property type="project" value="ARUK-UCL"/>
</dbReference>
<dbReference type="GO" id="GO:0070830">
    <property type="term" value="P:bicellular tight junction assembly"/>
    <property type="evidence" value="ECO:0007669"/>
    <property type="project" value="Ensembl"/>
</dbReference>
<dbReference type="GO" id="GO:0045216">
    <property type="term" value="P:cell-cell junction organization"/>
    <property type="evidence" value="ECO:0000315"/>
    <property type="project" value="MGI"/>
</dbReference>
<dbReference type="GO" id="GO:0061028">
    <property type="term" value="P:establishment of endothelial barrier"/>
    <property type="evidence" value="ECO:0007669"/>
    <property type="project" value="Ensembl"/>
</dbReference>
<dbReference type="GO" id="GO:0007605">
    <property type="term" value="P:sensory perception of sound"/>
    <property type="evidence" value="ECO:0000315"/>
    <property type="project" value="MGI"/>
</dbReference>
<dbReference type="Gene3D" id="6.10.140.340">
    <property type="match status" value="1"/>
</dbReference>
<dbReference type="InterPro" id="IPR031176">
    <property type="entry name" value="ELL/occludin"/>
</dbReference>
<dbReference type="InterPro" id="IPR008253">
    <property type="entry name" value="Marvel"/>
</dbReference>
<dbReference type="InterPro" id="IPR010844">
    <property type="entry name" value="Occludin_ELL"/>
</dbReference>
<dbReference type="PANTHER" id="PTHR23288:SF3">
    <property type="entry name" value="MARVEL DOMAIN-CONTAINING PROTEIN 2"/>
    <property type="match status" value="1"/>
</dbReference>
<dbReference type="PANTHER" id="PTHR23288">
    <property type="entry name" value="OCCLUDIN AND RNA POLYMERASE II ELONGATION FACTOR ELL"/>
    <property type="match status" value="1"/>
</dbReference>
<dbReference type="Pfam" id="PF01284">
    <property type="entry name" value="MARVEL"/>
    <property type="match status" value="1"/>
</dbReference>
<dbReference type="Pfam" id="PF07303">
    <property type="entry name" value="Occludin_ELL"/>
    <property type="match status" value="1"/>
</dbReference>
<dbReference type="SUPFAM" id="SSF144292">
    <property type="entry name" value="occludin/ELL-like"/>
    <property type="match status" value="1"/>
</dbReference>
<dbReference type="PROSITE" id="PS51225">
    <property type="entry name" value="MARVEL"/>
    <property type="match status" value="1"/>
</dbReference>
<dbReference type="PROSITE" id="PS51980">
    <property type="entry name" value="OCEL"/>
    <property type="match status" value="1"/>
</dbReference>
<reference key="1">
    <citation type="journal article" date="2005" name="J. Cell Biol.">
        <title>Tricellulin constitutes a novel barrier at tricellular contacts of epithelial cells.</title>
        <authorList>
            <person name="Ikenouchi J."/>
            <person name="Furuse M."/>
            <person name="Furuse K."/>
            <person name="Sasaki H."/>
            <person name="Tsukita S."/>
            <person name="Tsukita S."/>
        </authorList>
    </citation>
    <scope>NUCLEOTIDE SEQUENCE [MRNA]</scope>
    <scope>TOPOLOGY</scope>
    <scope>FUNCTION</scope>
    <scope>SUBCELLULAR LOCATION</scope>
    <scope>TISSUE SPECIFICITY</scope>
    <scope>PHOSPHORYLATION</scope>
</reference>
<reference key="2">
    <citation type="journal article" date="2006" name="Am. J. Hum. Genet.">
        <title>Tricellulin is a tight-junction protein necessary for hearing.</title>
        <authorList>
            <person name="Riazuddin S."/>
            <person name="Ahmed Z.M."/>
            <person name="Fanning A.S."/>
            <person name="Lagziel A."/>
            <person name="Kitajiri S."/>
            <person name="Ramzan K."/>
            <person name="Khan S.N."/>
            <person name="Chattaraj P."/>
            <person name="Friedman P.L."/>
            <person name="Anderson J.M."/>
            <person name="Belyantseva I.A."/>
            <person name="Forge A."/>
            <person name="Riazuddin S."/>
            <person name="Friedman T.B."/>
        </authorList>
    </citation>
    <scope>NUCLEOTIDE SEQUENCE [MRNA]</scope>
    <scope>SUBCELLULAR LOCATION</scope>
    <scope>TISSUE SPECIFICITY</scope>
    <source>
        <strain>C57BL/6J</strain>
        <tissue>Cochlea</tissue>
    </source>
</reference>
<reference key="3">
    <citation type="journal article" date="2005" name="Science">
        <title>The transcriptional landscape of the mammalian genome.</title>
        <authorList>
            <person name="Carninci P."/>
            <person name="Kasukawa T."/>
            <person name="Katayama S."/>
            <person name="Gough J."/>
            <person name="Frith M.C."/>
            <person name="Maeda N."/>
            <person name="Oyama R."/>
            <person name="Ravasi T."/>
            <person name="Lenhard B."/>
            <person name="Wells C."/>
            <person name="Kodzius R."/>
            <person name="Shimokawa K."/>
            <person name="Bajic V.B."/>
            <person name="Brenner S.E."/>
            <person name="Batalov S."/>
            <person name="Forrest A.R."/>
            <person name="Zavolan M."/>
            <person name="Davis M.J."/>
            <person name="Wilming L.G."/>
            <person name="Aidinis V."/>
            <person name="Allen J.E."/>
            <person name="Ambesi-Impiombato A."/>
            <person name="Apweiler R."/>
            <person name="Aturaliya R.N."/>
            <person name="Bailey T.L."/>
            <person name="Bansal M."/>
            <person name="Baxter L."/>
            <person name="Beisel K.W."/>
            <person name="Bersano T."/>
            <person name="Bono H."/>
            <person name="Chalk A.M."/>
            <person name="Chiu K.P."/>
            <person name="Choudhary V."/>
            <person name="Christoffels A."/>
            <person name="Clutterbuck D.R."/>
            <person name="Crowe M.L."/>
            <person name="Dalla E."/>
            <person name="Dalrymple B.P."/>
            <person name="de Bono B."/>
            <person name="Della Gatta G."/>
            <person name="di Bernardo D."/>
            <person name="Down T."/>
            <person name="Engstrom P."/>
            <person name="Fagiolini M."/>
            <person name="Faulkner G."/>
            <person name="Fletcher C.F."/>
            <person name="Fukushima T."/>
            <person name="Furuno M."/>
            <person name="Futaki S."/>
            <person name="Gariboldi M."/>
            <person name="Georgii-Hemming P."/>
            <person name="Gingeras T.R."/>
            <person name="Gojobori T."/>
            <person name="Green R.E."/>
            <person name="Gustincich S."/>
            <person name="Harbers M."/>
            <person name="Hayashi Y."/>
            <person name="Hensch T.K."/>
            <person name="Hirokawa N."/>
            <person name="Hill D."/>
            <person name="Huminiecki L."/>
            <person name="Iacono M."/>
            <person name="Ikeo K."/>
            <person name="Iwama A."/>
            <person name="Ishikawa T."/>
            <person name="Jakt M."/>
            <person name="Kanapin A."/>
            <person name="Katoh M."/>
            <person name="Kawasawa Y."/>
            <person name="Kelso J."/>
            <person name="Kitamura H."/>
            <person name="Kitano H."/>
            <person name="Kollias G."/>
            <person name="Krishnan S.P."/>
            <person name="Kruger A."/>
            <person name="Kummerfeld S.K."/>
            <person name="Kurochkin I.V."/>
            <person name="Lareau L.F."/>
            <person name="Lazarevic D."/>
            <person name="Lipovich L."/>
            <person name="Liu J."/>
            <person name="Liuni S."/>
            <person name="McWilliam S."/>
            <person name="Madan Babu M."/>
            <person name="Madera M."/>
            <person name="Marchionni L."/>
            <person name="Matsuda H."/>
            <person name="Matsuzawa S."/>
            <person name="Miki H."/>
            <person name="Mignone F."/>
            <person name="Miyake S."/>
            <person name="Morris K."/>
            <person name="Mottagui-Tabar S."/>
            <person name="Mulder N."/>
            <person name="Nakano N."/>
            <person name="Nakauchi H."/>
            <person name="Ng P."/>
            <person name="Nilsson R."/>
            <person name="Nishiguchi S."/>
            <person name="Nishikawa S."/>
            <person name="Nori F."/>
            <person name="Ohara O."/>
            <person name="Okazaki Y."/>
            <person name="Orlando V."/>
            <person name="Pang K.C."/>
            <person name="Pavan W.J."/>
            <person name="Pavesi G."/>
            <person name="Pesole G."/>
            <person name="Petrovsky N."/>
            <person name="Piazza S."/>
            <person name="Reed J."/>
            <person name="Reid J.F."/>
            <person name="Ring B.Z."/>
            <person name="Ringwald M."/>
            <person name="Rost B."/>
            <person name="Ruan Y."/>
            <person name="Salzberg S.L."/>
            <person name="Sandelin A."/>
            <person name="Schneider C."/>
            <person name="Schoenbach C."/>
            <person name="Sekiguchi K."/>
            <person name="Semple C.A."/>
            <person name="Seno S."/>
            <person name="Sessa L."/>
            <person name="Sheng Y."/>
            <person name="Shibata Y."/>
            <person name="Shimada H."/>
            <person name="Shimada K."/>
            <person name="Silva D."/>
            <person name="Sinclair B."/>
            <person name="Sperling S."/>
            <person name="Stupka E."/>
            <person name="Sugiura K."/>
            <person name="Sultana R."/>
            <person name="Takenaka Y."/>
            <person name="Taki K."/>
            <person name="Tammoja K."/>
            <person name="Tan S.L."/>
            <person name="Tang S."/>
            <person name="Taylor M.S."/>
            <person name="Tegner J."/>
            <person name="Teichmann S.A."/>
            <person name="Ueda H.R."/>
            <person name="van Nimwegen E."/>
            <person name="Verardo R."/>
            <person name="Wei C.L."/>
            <person name="Yagi K."/>
            <person name="Yamanishi H."/>
            <person name="Zabarovsky E."/>
            <person name="Zhu S."/>
            <person name="Zimmer A."/>
            <person name="Hide W."/>
            <person name="Bult C."/>
            <person name="Grimmond S.M."/>
            <person name="Teasdale R.D."/>
            <person name="Liu E.T."/>
            <person name="Brusic V."/>
            <person name="Quackenbush J."/>
            <person name="Wahlestedt C."/>
            <person name="Mattick J.S."/>
            <person name="Hume D.A."/>
            <person name="Kai C."/>
            <person name="Sasaki D."/>
            <person name="Tomaru Y."/>
            <person name="Fukuda S."/>
            <person name="Kanamori-Katayama M."/>
            <person name="Suzuki M."/>
            <person name="Aoki J."/>
            <person name="Arakawa T."/>
            <person name="Iida J."/>
            <person name="Imamura K."/>
            <person name="Itoh M."/>
            <person name="Kato T."/>
            <person name="Kawaji H."/>
            <person name="Kawagashira N."/>
            <person name="Kawashima T."/>
            <person name="Kojima M."/>
            <person name="Kondo S."/>
            <person name="Konno H."/>
            <person name="Nakano K."/>
            <person name="Ninomiya N."/>
            <person name="Nishio T."/>
            <person name="Okada M."/>
            <person name="Plessy C."/>
            <person name="Shibata K."/>
            <person name="Shiraki T."/>
            <person name="Suzuki S."/>
            <person name="Tagami M."/>
            <person name="Waki K."/>
            <person name="Watahiki A."/>
            <person name="Okamura-Oho Y."/>
            <person name="Suzuki H."/>
            <person name="Kawai J."/>
            <person name="Hayashizaki Y."/>
        </authorList>
    </citation>
    <scope>NUCLEOTIDE SEQUENCE [LARGE SCALE MRNA]</scope>
    <source>
        <strain>C57BL/6J</strain>
    </source>
</reference>
<reference key="4">
    <citation type="journal article" date="2004" name="Genome Res.">
        <title>The status, quality, and expansion of the NIH full-length cDNA project: the Mammalian Gene Collection (MGC).</title>
        <authorList>
            <consortium name="The MGC Project Team"/>
        </authorList>
    </citation>
    <scope>NUCLEOTIDE SEQUENCE [LARGE SCALE MRNA] OF 120-555</scope>
    <source>
        <strain>Czech II</strain>
        <strain>FVB/N</strain>
        <tissue>Mammary gland</tissue>
    </source>
</reference>
<reference key="5">
    <citation type="journal article" date="2010" name="Cell">
        <title>A tissue-specific atlas of mouse protein phosphorylation and expression.</title>
        <authorList>
            <person name="Huttlin E.L."/>
            <person name="Jedrychowski M.P."/>
            <person name="Elias J.E."/>
            <person name="Goswami T."/>
            <person name="Rad R."/>
            <person name="Beausoleil S.A."/>
            <person name="Villen J."/>
            <person name="Haas W."/>
            <person name="Sowa M.E."/>
            <person name="Gygi S.P."/>
        </authorList>
    </citation>
    <scope>PHOSPHORYLATION [LARGE SCALE ANALYSIS] AT SER-117 AND SER-121</scope>
    <scope>IDENTIFICATION BY MASS SPECTROMETRY [LARGE SCALE ANALYSIS]</scope>
    <source>
        <tissue>Kidney</tissue>
        <tissue>Lung</tissue>
    </source>
</reference>
<reference key="6">
    <citation type="journal article" date="2011" name="J. Cell Sci.">
        <title>LSR defines cell corners for tricellular tight junction formation in epithelial cells.</title>
        <authorList>
            <person name="Masuda S."/>
            <person name="Oda Y."/>
            <person name="Sasaki H."/>
            <person name="Ikenouchi J."/>
            <person name="Higashi T."/>
            <person name="Akashi M."/>
            <person name="Nishi E."/>
            <person name="Furuse M."/>
        </authorList>
    </citation>
    <scope>FUNCTION</scope>
    <scope>SUBCELLULAR LOCATION</scope>
    <scope>INTERACTION WITH LSR</scope>
</reference>
<reference key="7">
    <citation type="journal article" date="2013" name="J. Cell Sci.">
        <title>Analysis of the 'angulin' proteins LSR, ILDR1 and ILDR2--tricellulin recruitment, epithelial barrier function and implication in deafness pathogenesis.</title>
        <authorList>
            <person name="Higashi T."/>
            <person name="Tokuda S."/>
            <person name="Kitajiri S."/>
            <person name="Masuda S."/>
            <person name="Nakamura H."/>
            <person name="Oda Y."/>
            <person name="Furuse M."/>
        </authorList>
    </citation>
    <scope>TISSUE SPECIFICITY</scope>
    <scope>INTERACTION WITH LSR; ILDR1 AND ILDR2</scope>
    <scope>SUBCELLULAR LOCATION</scope>
</reference>
<reference key="8">
    <citation type="journal article" date="2014" name="Genes Cells">
        <title>JNK1/2-dependent phosphorylation of angulin-1/LSR is required for the exclusive localization of angulin-1/LSR and tricellulin at tricellular contacts in EpH4 epithelial sheet.</title>
        <authorList>
            <person name="Nakatsu D."/>
            <person name="Kano F."/>
            <person name="Taguchi Y."/>
            <person name="Sugawara T."/>
            <person name="Nishizono T."/>
            <person name="Nishikawa K."/>
            <person name="Oda Y."/>
            <person name="Furuse M."/>
            <person name="Murata M."/>
        </authorList>
    </citation>
    <scope>SUBCELLULAR LOCATION</scope>
</reference>
<reference key="9">
    <citation type="journal article" date="2015" name="Hum. Mol. Genet.">
        <title>ILDR1 null mice, a model of human deafness DFNB42, show structural aberrations of tricellular tight junctions and degeneration of auditory hair cells.</title>
        <authorList>
            <person name="Morozko E.L."/>
            <person name="Nishio A."/>
            <person name="Ingham N.J."/>
            <person name="Chandra R."/>
            <person name="Fitzgerald T."/>
            <person name="Martelletti E."/>
            <person name="Borck G."/>
            <person name="Wilson E."/>
            <person name="Riordan G.P."/>
            <person name="Wangemann P."/>
            <person name="Forge A."/>
            <person name="Steel K.P."/>
            <person name="Liddle R.A."/>
            <person name="Friedman T.B."/>
            <person name="Belyantseva I.A."/>
        </authorList>
    </citation>
    <scope>SUBCELLULAR LOCATION</scope>
</reference>
<reference key="10">
    <citation type="journal article" date="2015" name="Sci. Rep.">
        <title>Deletion of Tricellulin Causes Progressive Hearing Loss Associated with Degeneration of Cochlear Hair Cells.</title>
        <authorList>
            <person name="Kamitani T."/>
            <person name="Sakaguchi H."/>
            <person name="Tamura A."/>
            <person name="Miyashita T."/>
            <person name="Yamazaki Y."/>
            <person name="Tokumasu R."/>
            <person name="Inamoto R."/>
            <person name="Matsubara A."/>
            <person name="Mori N."/>
            <person name="Hisa Y."/>
            <person name="Tsukita S."/>
        </authorList>
    </citation>
    <scope>FUNCTION</scope>
    <scope>DISRUPTION PHENOTYPE</scope>
    <scope>SUBCELLULAR LOCATION</scope>
    <scope>TISSUE SPECIFICITY</scope>
</reference>
<accession>Q3UZP0</accession>
<accession>Q80UJ4</accession>
<accession>Q99LE8</accession>